<dbReference type="EC" id="1.18.1.2" evidence="1"/>
<dbReference type="EMBL" id="AE006914">
    <property type="protein sequence ID" value="AAL03175.1"/>
    <property type="molecule type" value="Genomic_DNA"/>
</dbReference>
<dbReference type="PIR" id="E97779">
    <property type="entry name" value="E97779"/>
</dbReference>
<dbReference type="SMR" id="Q92HY3"/>
<dbReference type="KEGG" id="rco:RC0637"/>
<dbReference type="HOGENOM" id="CLU_031864_5_5_5"/>
<dbReference type="Proteomes" id="UP000000816">
    <property type="component" value="Chromosome"/>
</dbReference>
<dbReference type="GO" id="GO:0004324">
    <property type="term" value="F:ferredoxin-NADP+ reductase activity"/>
    <property type="evidence" value="ECO:0007669"/>
    <property type="project" value="UniProtKB-UniRule"/>
</dbReference>
<dbReference type="GO" id="GO:0050660">
    <property type="term" value="F:flavin adenine dinucleotide binding"/>
    <property type="evidence" value="ECO:0007669"/>
    <property type="project" value="UniProtKB-UniRule"/>
</dbReference>
<dbReference type="GO" id="GO:0050661">
    <property type="term" value="F:NADP binding"/>
    <property type="evidence" value="ECO:0007669"/>
    <property type="project" value="UniProtKB-UniRule"/>
</dbReference>
<dbReference type="Gene3D" id="3.50.50.60">
    <property type="entry name" value="FAD/NAD(P)-binding domain"/>
    <property type="match status" value="2"/>
</dbReference>
<dbReference type="HAMAP" id="MF_01685">
    <property type="entry name" value="FENR2"/>
    <property type="match status" value="1"/>
</dbReference>
<dbReference type="InterPro" id="IPR036188">
    <property type="entry name" value="FAD/NAD-bd_sf"/>
</dbReference>
<dbReference type="InterPro" id="IPR023753">
    <property type="entry name" value="FAD/NAD-binding_dom"/>
</dbReference>
<dbReference type="InterPro" id="IPR022890">
    <property type="entry name" value="Fd--NADP_Rdtase_type_2"/>
</dbReference>
<dbReference type="InterPro" id="IPR050097">
    <property type="entry name" value="Ferredoxin-NADP_redctase_2"/>
</dbReference>
<dbReference type="PANTHER" id="PTHR48105">
    <property type="entry name" value="THIOREDOXIN REDUCTASE 1-RELATED-RELATED"/>
    <property type="match status" value="1"/>
</dbReference>
<dbReference type="Pfam" id="PF07992">
    <property type="entry name" value="Pyr_redox_2"/>
    <property type="match status" value="1"/>
</dbReference>
<dbReference type="PRINTS" id="PR00368">
    <property type="entry name" value="FADPNR"/>
</dbReference>
<dbReference type="PRINTS" id="PR00469">
    <property type="entry name" value="PNDRDTASEII"/>
</dbReference>
<dbReference type="SUPFAM" id="SSF51905">
    <property type="entry name" value="FAD/NAD(P)-binding domain"/>
    <property type="match status" value="1"/>
</dbReference>
<keyword id="KW-0274">FAD</keyword>
<keyword id="KW-0285">Flavoprotein</keyword>
<keyword id="KW-0521">NADP</keyword>
<keyword id="KW-0560">Oxidoreductase</keyword>
<evidence type="ECO:0000255" key="1">
    <source>
        <dbReference type="HAMAP-Rule" id="MF_01685"/>
    </source>
</evidence>
<comment type="catalytic activity">
    <reaction evidence="1">
        <text>2 reduced [2Fe-2S]-[ferredoxin] + NADP(+) + H(+) = 2 oxidized [2Fe-2S]-[ferredoxin] + NADPH</text>
        <dbReference type="Rhea" id="RHEA:20125"/>
        <dbReference type="Rhea" id="RHEA-COMP:10000"/>
        <dbReference type="Rhea" id="RHEA-COMP:10001"/>
        <dbReference type="ChEBI" id="CHEBI:15378"/>
        <dbReference type="ChEBI" id="CHEBI:33737"/>
        <dbReference type="ChEBI" id="CHEBI:33738"/>
        <dbReference type="ChEBI" id="CHEBI:57783"/>
        <dbReference type="ChEBI" id="CHEBI:58349"/>
        <dbReference type="EC" id="1.18.1.2"/>
    </reaction>
</comment>
<comment type="cofactor">
    <cofactor evidence="1">
        <name>FAD</name>
        <dbReference type="ChEBI" id="CHEBI:57692"/>
    </cofactor>
    <text evidence="1">Binds 1 FAD per subunit.</text>
</comment>
<comment type="subunit">
    <text evidence="1">Homodimer.</text>
</comment>
<comment type="similarity">
    <text evidence="1">Belongs to the ferredoxin--NADP reductase type 2 family.</text>
</comment>
<sequence length="340" mass="37432">MYNTDVVIIGAGPVGLFAVFQAGMLGMKCHVIDAQEVIGGQCITLYPEKPIYDIPAYPKIAAEELIKQLALQAAPFNPIYHLNQQAIELNKQDDFFEIKTSKNTLIKSKVIIIAAGAGSFGPNKPPLANIEDFESKSVFYFINDKSKFAGKNIVIAGGGDSAVDWAISLSDIANKIYLVHRRDKFTAAPESVRQLRHIAETDKIELITGYQLNALDGNNSELQSVIVKDLQNNTRKLDANILLPFFGLKQDLGSLANWGLNVKLHHIEVDSSYYQTNIEGIYAIGDIAHYVGKLKLILTGFAEAASSLHHAYSRVFDGKALHFEYSTTKNTGKRSKSVTK</sequence>
<feature type="chain" id="PRO_0000364924" description="Ferredoxin--NADP reductase">
    <location>
        <begin position="1"/>
        <end position="340"/>
    </location>
</feature>
<feature type="binding site" evidence="1">
    <location>
        <position position="33"/>
    </location>
    <ligand>
        <name>FAD</name>
        <dbReference type="ChEBI" id="CHEBI:57692"/>
    </ligand>
</feature>
<feature type="binding site" evidence="1">
    <location>
        <position position="41"/>
    </location>
    <ligand>
        <name>FAD</name>
        <dbReference type="ChEBI" id="CHEBI:57692"/>
    </ligand>
</feature>
<feature type="binding site" evidence="1">
    <location>
        <position position="46"/>
    </location>
    <ligand>
        <name>FAD</name>
        <dbReference type="ChEBI" id="CHEBI:57692"/>
    </ligand>
</feature>
<feature type="binding site" evidence="1">
    <location>
        <position position="86"/>
    </location>
    <ligand>
        <name>FAD</name>
        <dbReference type="ChEBI" id="CHEBI:57692"/>
    </ligand>
</feature>
<feature type="binding site" evidence="1">
    <location>
        <position position="120"/>
    </location>
    <ligand>
        <name>FAD</name>
        <dbReference type="ChEBI" id="CHEBI:57692"/>
    </ligand>
</feature>
<feature type="binding site" evidence="1">
    <location>
        <position position="286"/>
    </location>
    <ligand>
        <name>FAD</name>
        <dbReference type="ChEBI" id="CHEBI:57692"/>
    </ligand>
</feature>
<feature type="binding site" evidence="1">
    <location>
        <position position="327"/>
    </location>
    <ligand>
        <name>FAD</name>
        <dbReference type="ChEBI" id="CHEBI:57692"/>
    </ligand>
</feature>
<organism>
    <name type="scientific">Rickettsia conorii (strain ATCC VR-613 / Malish 7)</name>
    <dbReference type="NCBI Taxonomy" id="272944"/>
    <lineage>
        <taxon>Bacteria</taxon>
        <taxon>Pseudomonadati</taxon>
        <taxon>Pseudomonadota</taxon>
        <taxon>Alphaproteobacteria</taxon>
        <taxon>Rickettsiales</taxon>
        <taxon>Rickettsiaceae</taxon>
        <taxon>Rickettsieae</taxon>
        <taxon>Rickettsia</taxon>
        <taxon>spotted fever group</taxon>
    </lineage>
</organism>
<name>FENR_RICCN</name>
<reference key="1">
    <citation type="journal article" date="2001" name="Science">
        <title>Mechanisms of evolution in Rickettsia conorii and R. prowazekii.</title>
        <authorList>
            <person name="Ogata H."/>
            <person name="Audic S."/>
            <person name="Renesto-Audiffren P."/>
            <person name="Fournier P.-E."/>
            <person name="Barbe V."/>
            <person name="Samson D."/>
            <person name="Roux V."/>
            <person name="Cossart P."/>
            <person name="Weissenbach J."/>
            <person name="Claverie J.-M."/>
            <person name="Raoult D."/>
        </authorList>
    </citation>
    <scope>NUCLEOTIDE SEQUENCE [LARGE SCALE GENOMIC DNA]</scope>
    <source>
        <strain>ATCC VR-613 / Malish 7</strain>
    </source>
</reference>
<protein>
    <recommendedName>
        <fullName evidence="1">Ferredoxin--NADP reductase</fullName>
        <shortName evidence="1">FNR</shortName>
        <shortName evidence="1">Fd-NADP(+) reductase</shortName>
        <ecNumber evidence="1">1.18.1.2</ecNumber>
    </recommendedName>
</protein>
<gene>
    <name type="ordered locus">RC0637</name>
</gene>
<accession>Q92HY3</accession>
<proteinExistence type="inferred from homology"/>